<feature type="chain" id="PRO_1000145357" description="Peptide methionine sulfoxide reductase MsrB">
    <location>
        <begin position="1"/>
        <end position="143"/>
    </location>
</feature>
<feature type="domain" description="MsrB" evidence="2">
    <location>
        <begin position="16"/>
        <end position="139"/>
    </location>
</feature>
<feature type="active site" description="Nucleophile" evidence="2">
    <location>
        <position position="128"/>
    </location>
</feature>
<feature type="binding site" evidence="2">
    <location>
        <position position="55"/>
    </location>
    <ligand>
        <name>Zn(2+)</name>
        <dbReference type="ChEBI" id="CHEBI:29105"/>
    </ligand>
</feature>
<feature type="binding site" evidence="2">
    <location>
        <position position="58"/>
    </location>
    <ligand>
        <name>Zn(2+)</name>
        <dbReference type="ChEBI" id="CHEBI:29105"/>
    </ligand>
</feature>
<feature type="binding site" evidence="2">
    <location>
        <position position="104"/>
    </location>
    <ligand>
        <name>Zn(2+)</name>
        <dbReference type="ChEBI" id="CHEBI:29105"/>
    </ligand>
</feature>
<feature type="binding site" evidence="2">
    <location>
        <position position="107"/>
    </location>
    <ligand>
        <name>Zn(2+)</name>
        <dbReference type="ChEBI" id="CHEBI:29105"/>
    </ligand>
</feature>
<dbReference type="EC" id="1.8.4.12" evidence="1"/>
<dbReference type="EMBL" id="CP000546">
    <property type="protein sequence ID" value="ABN02329.1"/>
    <property type="molecule type" value="Genomic_DNA"/>
</dbReference>
<dbReference type="RefSeq" id="WP_004193880.1">
    <property type="nucleotide sequence ID" value="NC_008836.1"/>
</dbReference>
<dbReference type="SMR" id="A2SBI6"/>
<dbReference type="GeneID" id="92979175"/>
<dbReference type="KEGG" id="bml:BMA10229_A3373"/>
<dbReference type="HOGENOM" id="CLU_031040_8_5_4"/>
<dbReference type="Proteomes" id="UP000002283">
    <property type="component" value="Chromosome I"/>
</dbReference>
<dbReference type="GO" id="GO:0005737">
    <property type="term" value="C:cytoplasm"/>
    <property type="evidence" value="ECO:0007669"/>
    <property type="project" value="TreeGrafter"/>
</dbReference>
<dbReference type="GO" id="GO:0033743">
    <property type="term" value="F:peptide-methionine (R)-S-oxide reductase activity"/>
    <property type="evidence" value="ECO:0007669"/>
    <property type="project" value="UniProtKB-UniRule"/>
</dbReference>
<dbReference type="GO" id="GO:0008270">
    <property type="term" value="F:zinc ion binding"/>
    <property type="evidence" value="ECO:0007669"/>
    <property type="project" value="UniProtKB-UniRule"/>
</dbReference>
<dbReference type="GO" id="GO:0030091">
    <property type="term" value="P:protein repair"/>
    <property type="evidence" value="ECO:0007669"/>
    <property type="project" value="InterPro"/>
</dbReference>
<dbReference type="GO" id="GO:0006979">
    <property type="term" value="P:response to oxidative stress"/>
    <property type="evidence" value="ECO:0007669"/>
    <property type="project" value="InterPro"/>
</dbReference>
<dbReference type="FunFam" id="2.170.150.20:FF:000003">
    <property type="entry name" value="Peptide methionine sulfoxide reductase MsrB"/>
    <property type="match status" value="1"/>
</dbReference>
<dbReference type="Gene3D" id="2.170.150.20">
    <property type="entry name" value="Peptide methionine sulfoxide reductase"/>
    <property type="match status" value="1"/>
</dbReference>
<dbReference type="HAMAP" id="MF_01400">
    <property type="entry name" value="MsrB"/>
    <property type="match status" value="1"/>
</dbReference>
<dbReference type="InterPro" id="IPR028427">
    <property type="entry name" value="Met_Sox_Rdtase_MsrB"/>
</dbReference>
<dbReference type="InterPro" id="IPR002579">
    <property type="entry name" value="Met_Sox_Rdtase_MsrB_dom"/>
</dbReference>
<dbReference type="InterPro" id="IPR011057">
    <property type="entry name" value="Mss4-like_sf"/>
</dbReference>
<dbReference type="NCBIfam" id="TIGR00357">
    <property type="entry name" value="peptide-methionine (R)-S-oxide reductase MsrB"/>
    <property type="match status" value="1"/>
</dbReference>
<dbReference type="PANTHER" id="PTHR10173">
    <property type="entry name" value="METHIONINE SULFOXIDE REDUCTASE"/>
    <property type="match status" value="1"/>
</dbReference>
<dbReference type="PANTHER" id="PTHR10173:SF52">
    <property type="entry name" value="METHIONINE-R-SULFOXIDE REDUCTASE B1"/>
    <property type="match status" value="1"/>
</dbReference>
<dbReference type="Pfam" id="PF01641">
    <property type="entry name" value="SelR"/>
    <property type="match status" value="1"/>
</dbReference>
<dbReference type="SUPFAM" id="SSF51316">
    <property type="entry name" value="Mss4-like"/>
    <property type="match status" value="1"/>
</dbReference>
<dbReference type="PROSITE" id="PS51790">
    <property type="entry name" value="MSRB"/>
    <property type="match status" value="1"/>
</dbReference>
<reference key="1">
    <citation type="journal article" date="2010" name="Genome Biol. Evol.">
        <title>Continuing evolution of Burkholderia mallei through genome reduction and large-scale rearrangements.</title>
        <authorList>
            <person name="Losada L."/>
            <person name="Ronning C.M."/>
            <person name="DeShazer D."/>
            <person name="Woods D."/>
            <person name="Fedorova N."/>
            <person name="Kim H.S."/>
            <person name="Shabalina S.A."/>
            <person name="Pearson T.R."/>
            <person name="Brinkac L."/>
            <person name="Tan P."/>
            <person name="Nandi T."/>
            <person name="Crabtree J."/>
            <person name="Badger J."/>
            <person name="Beckstrom-Sternberg S."/>
            <person name="Saqib M."/>
            <person name="Schutzer S.E."/>
            <person name="Keim P."/>
            <person name="Nierman W.C."/>
        </authorList>
    </citation>
    <scope>NUCLEOTIDE SEQUENCE [LARGE SCALE GENOMIC DNA]</scope>
    <source>
        <strain>NCTC 10229</strain>
    </source>
</reference>
<proteinExistence type="inferred from homology"/>
<keyword id="KW-0479">Metal-binding</keyword>
<keyword id="KW-0560">Oxidoreductase</keyword>
<keyword id="KW-0862">Zinc</keyword>
<name>MSRB_BURM9</name>
<accession>A2SBI6</accession>
<comment type="catalytic activity">
    <reaction evidence="1">
        <text>L-methionyl-[protein] + [thioredoxin]-disulfide + H2O = L-methionyl-(R)-S-oxide-[protein] + [thioredoxin]-dithiol</text>
        <dbReference type="Rhea" id="RHEA:24164"/>
        <dbReference type="Rhea" id="RHEA-COMP:10698"/>
        <dbReference type="Rhea" id="RHEA-COMP:10700"/>
        <dbReference type="Rhea" id="RHEA-COMP:12313"/>
        <dbReference type="Rhea" id="RHEA-COMP:12314"/>
        <dbReference type="ChEBI" id="CHEBI:15377"/>
        <dbReference type="ChEBI" id="CHEBI:16044"/>
        <dbReference type="ChEBI" id="CHEBI:29950"/>
        <dbReference type="ChEBI" id="CHEBI:45764"/>
        <dbReference type="ChEBI" id="CHEBI:50058"/>
        <dbReference type="EC" id="1.8.4.12"/>
    </reaction>
</comment>
<comment type="cofactor">
    <cofactor evidence="1">
        <name>Zn(2+)</name>
        <dbReference type="ChEBI" id="CHEBI:29105"/>
    </cofactor>
    <text evidence="1">Binds 1 zinc ion per subunit. The zinc ion is important for the structural integrity of the protein.</text>
</comment>
<comment type="similarity">
    <text evidence="1">Belongs to the MsrB Met sulfoxide reductase family.</text>
</comment>
<evidence type="ECO:0000255" key="1">
    <source>
        <dbReference type="HAMAP-Rule" id="MF_01400"/>
    </source>
</evidence>
<evidence type="ECO:0000255" key="2">
    <source>
        <dbReference type="PROSITE-ProRule" id="PRU01126"/>
    </source>
</evidence>
<sequence>MSGDRDDPRYPYPKDDAELRRRLTPMQYEVTQHAATEPPFTGEYTDTEDAGIYHCVVCGTALFESGAKFHSGCGWPSYFKPIDGEVIDEKMDYTHGMTRVEVRCNQCGAHLGHVFEDGPRDKTGLRYCINSAALNFEAKPERK</sequence>
<gene>
    <name evidence="1" type="primary">msrB</name>
    <name type="ordered locus">BMA10229_A3373</name>
</gene>
<organism>
    <name type="scientific">Burkholderia mallei (strain NCTC 10229)</name>
    <dbReference type="NCBI Taxonomy" id="412022"/>
    <lineage>
        <taxon>Bacteria</taxon>
        <taxon>Pseudomonadati</taxon>
        <taxon>Pseudomonadota</taxon>
        <taxon>Betaproteobacteria</taxon>
        <taxon>Burkholderiales</taxon>
        <taxon>Burkholderiaceae</taxon>
        <taxon>Burkholderia</taxon>
        <taxon>pseudomallei group</taxon>
    </lineage>
</organism>
<protein>
    <recommendedName>
        <fullName evidence="1">Peptide methionine sulfoxide reductase MsrB</fullName>
        <ecNumber evidence="1">1.8.4.12</ecNumber>
    </recommendedName>
    <alternativeName>
        <fullName evidence="1">Peptide-methionine (R)-S-oxide reductase</fullName>
    </alternativeName>
</protein>